<proteinExistence type="inferred from homology"/>
<name>TGT_BACMK</name>
<organism>
    <name type="scientific">Bacillus mycoides (strain KBAB4)</name>
    <name type="common">Bacillus weihenstephanensis</name>
    <dbReference type="NCBI Taxonomy" id="315730"/>
    <lineage>
        <taxon>Bacteria</taxon>
        <taxon>Bacillati</taxon>
        <taxon>Bacillota</taxon>
        <taxon>Bacilli</taxon>
        <taxon>Bacillales</taxon>
        <taxon>Bacillaceae</taxon>
        <taxon>Bacillus</taxon>
        <taxon>Bacillus cereus group</taxon>
    </lineage>
</organism>
<dbReference type="EC" id="2.4.2.29" evidence="1"/>
<dbReference type="EMBL" id="CP000903">
    <property type="protein sequence ID" value="ABY45423.1"/>
    <property type="molecule type" value="Genomic_DNA"/>
</dbReference>
<dbReference type="RefSeq" id="WP_000125368.1">
    <property type="nucleotide sequence ID" value="NC_010184.1"/>
</dbReference>
<dbReference type="SMR" id="A9VIP3"/>
<dbReference type="GeneID" id="64185727"/>
<dbReference type="KEGG" id="bwe:BcerKBAB4_4264"/>
<dbReference type="eggNOG" id="COG0343">
    <property type="taxonomic scope" value="Bacteria"/>
</dbReference>
<dbReference type="HOGENOM" id="CLU_022060_0_1_9"/>
<dbReference type="UniPathway" id="UPA00392"/>
<dbReference type="Proteomes" id="UP000002154">
    <property type="component" value="Chromosome"/>
</dbReference>
<dbReference type="GO" id="GO:0005829">
    <property type="term" value="C:cytosol"/>
    <property type="evidence" value="ECO:0007669"/>
    <property type="project" value="TreeGrafter"/>
</dbReference>
<dbReference type="GO" id="GO:0046872">
    <property type="term" value="F:metal ion binding"/>
    <property type="evidence" value="ECO:0007669"/>
    <property type="project" value="UniProtKB-KW"/>
</dbReference>
<dbReference type="GO" id="GO:0008479">
    <property type="term" value="F:tRNA-guanosine(34) queuine transglycosylase activity"/>
    <property type="evidence" value="ECO:0007669"/>
    <property type="project" value="UniProtKB-UniRule"/>
</dbReference>
<dbReference type="GO" id="GO:0008616">
    <property type="term" value="P:queuosine biosynthetic process"/>
    <property type="evidence" value="ECO:0007669"/>
    <property type="project" value="UniProtKB-UniRule"/>
</dbReference>
<dbReference type="GO" id="GO:0002099">
    <property type="term" value="P:tRNA wobble guanine modification"/>
    <property type="evidence" value="ECO:0007669"/>
    <property type="project" value="TreeGrafter"/>
</dbReference>
<dbReference type="GO" id="GO:0101030">
    <property type="term" value="P:tRNA-guanine transglycosylation"/>
    <property type="evidence" value="ECO:0007669"/>
    <property type="project" value="InterPro"/>
</dbReference>
<dbReference type="FunFam" id="3.20.20.105:FF:000001">
    <property type="entry name" value="Queuine tRNA-ribosyltransferase"/>
    <property type="match status" value="1"/>
</dbReference>
<dbReference type="Gene3D" id="3.20.20.105">
    <property type="entry name" value="Queuine tRNA-ribosyltransferase-like"/>
    <property type="match status" value="1"/>
</dbReference>
<dbReference type="HAMAP" id="MF_00168">
    <property type="entry name" value="Q_tRNA_Tgt"/>
    <property type="match status" value="1"/>
</dbReference>
<dbReference type="InterPro" id="IPR050076">
    <property type="entry name" value="ArchSynthase1/Queuine_TRR"/>
</dbReference>
<dbReference type="InterPro" id="IPR004803">
    <property type="entry name" value="TGT"/>
</dbReference>
<dbReference type="InterPro" id="IPR036511">
    <property type="entry name" value="TGT-like_sf"/>
</dbReference>
<dbReference type="InterPro" id="IPR002616">
    <property type="entry name" value="tRNA_ribo_trans-like"/>
</dbReference>
<dbReference type="NCBIfam" id="TIGR00430">
    <property type="entry name" value="Q_tRNA_tgt"/>
    <property type="match status" value="1"/>
</dbReference>
<dbReference type="NCBIfam" id="TIGR00449">
    <property type="entry name" value="tgt_general"/>
    <property type="match status" value="1"/>
</dbReference>
<dbReference type="PANTHER" id="PTHR46499">
    <property type="entry name" value="QUEUINE TRNA-RIBOSYLTRANSFERASE"/>
    <property type="match status" value="1"/>
</dbReference>
<dbReference type="PANTHER" id="PTHR46499:SF1">
    <property type="entry name" value="QUEUINE TRNA-RIBOSYLTRANSFERASE"/>
    <property type="match status" value="1"/>
</dbReference>
<dbReference type="Pfam" id="PF01702">
    <property type="entry name" value="TGT"/>
    <property type="match status" value="1"/>
</dbReference>
<dbReference type="SUPFAM" id="SSF51713">
    <property type="entry name" value="tRNA-guanine transglycosylase"/>
    <property type="match status" value="1"/>
</dbReference>
<protein>
    <recommendedName>
        <fullName evidence="1">Queuine tRNA-ribosyltransferase</fullName>
        <ecNumber evidence="1">2.4.2.29</ecNumber>
    </recommendedName>
    <alternativeName>
        <fullName evidence="1">Guanine insertion enzyme</fullName>
    </alternativeName>
    <alternativeName>
        <fullName evidence="1">tRNA-guanine transglycosylase</fullName>
    </alternativeName>
</protein>
<accession>A9VIP3</accession>
<comment type="function">
    <text evidence="1">Catalyzes the base-exchange of a guanine (G) residue with the queuine precursor 7-aminomethyl-7-deazaguanine (PreQ1) at position 34 (anticodon wobble position) in tRNAs with GU(N) anticodons (tRNA-Asp, -Asn, -His and -Tyr). Catalysis occurs through a double-displacement mechanism. The nucleophile active site attacks the C1' of nucleotide 34 to detach the guanine base from the RNA, forming a covalent enzyme-RNA intermediate. The proton acceptor active site deprotonates the incoming PreQ1, allowing a nucleophilic attack on the C1' of the ribose to form the product. After dissociation, two additional enzymatic reactions on the tRNA convert PreQ1 to queuine (Q), resulting in the hypermodified nucleoside queuosine (7-(((4,5-cis-dihydroxy-2-cyclopenten-1-yl)amino)methyl)-7-deazaguanosine).</text>
</comment>
<comment type="catalytic activity">
    <reaction evidence="1">
        <text>7-aminomethyl-7-carbaguanine + guanosine(34) in tRNA = 7-aminomethyl-7-carbaguanosine(34) in tRNA + guanine</text>
        <dbReference type="Rhea" id="RHEA:24104"/>
        <dbReference type="Rhea" id="RHEA-COMP:10341"/>
        <dbReference type="Rhea" id="RHEA-COMP:10342"/>
        <dbReference type="ChEBI" id="CHEBI:16235"/>
        <dbReference type="ChEBI" id="CHEBI:58703"/>
        <dbReference type="ChEBI" id="CHEBI:74269"/>
        <dbReference type="ChEBI" id="CHEBI:82833"/>
        <dbReference type="EC" id="2.4.2.29"/>
    </reaction>
</comment>
<comment type="cofactor">
    <cofactor evidence="1">
        <name>Zn(2+)</name>
        <dbReference type="ChEBI" id="CHEBI:29105"/>
    </cofactor>
    <text evidence="1">Binds 1 zinc ion per subunit.</text>
</comment>
<comment type="pathway">
    <text evidence="1">tRNA modification; tRNA-queuosine biosynthesis.</text>
</comment>
<comment type="subunit">
    <text evidence="1">Homodimer. Within each dimer, one monomer is responsible for RNA recognition and catalysis, while the other monomer binds to the replacement base PreQ1.</text>
</comment>
<comment type="similarity">
    <text evidence="1">Belongs to the queuine tRNA-ribosyltransferase family.</text>
</comment>
<feature type="chain" id="PRO_1000097530" description="Queuine tRNA-ribosyltransferase">
    <location>
        <begin position="1"/>
        <end position="379"/>
    </location>
</feature>
<feature type="region of interest" description="RNA binding" evidence="1">
    <location>
        <begin position="249"/>
        <end position="255"/>
    </location>
</feature>
<feature type="region of interest" description="RNA binding; important for wobble base 34 recognition" evidence="1">
    <location>
        <begin position="273"/>
        <end position="277"/>
    </location>
</feature>
<feature type="active site" description="Proton acceptor" evidence="1">
    <location>
        <position position="94"/>
    </location>
</feature>
<feature type="active site" description="Nucleophile" evidence="1">
    <location>
        <position position="268"/>
    </location>
</feature>
<feature type="binding site" evidence="1">
    <location>
        <begin position="94"/>
        <end position="98"/>
    </location>
    <ligand>
        <name>substrate</name>
    </ligand>
</feature>
<feature type="binding site" evidence="1">
    <location>
        <position position="148"/>
    </location>
    <ligand>
        <name>substrate</name>
    </ligand>
</feature>
<feature type="binding site" evidence="1">
    <location>
        <position position="191"/>
    </location>
    <ligand>
        <name>substrate</name>
    </ligand>
</feature>
<feature type="binding site" evidence="1">
    <location>
        <position position="218"/>
    </location>
    <ligand>
        <name>substrate</name>
    </ligand>
</feature>
<feature type="binding site" evidence="1">
    <location>
        <position position="306"/>
    </location>
    <ligand>
        <name>Zn(2+)</name>
        <dbReference type="ChEBI" id="CHEBI:29105"/>
    </ligand>
</feature>
<feature type="binding site" evidence="1">
    <location>
        <position position="308"/>
    </location>
    <ligand>
        <name>Zn(2+)</name>
        <dbReference type="ChEBI" id="CHEBI:29105"/>
    </ligand>
</feature>
<feature type="binding site" evidence="1">
    <location>
        <position position="311"/>
    </location>
    <ligand>
        <name>Zn(2+)</name>
        <dbReference type="ChEBI" id="CHEBI:29105"/>
    </ligand>
</feature>
<feature type="binding site" evidence="1">
    <location>
        <position position="337"/>
    </location>
    <ligand>
        <name>Zn(2+)</name>
        <dbReference type="ChEBI" id="CHEBI:29105"/>
    </ligand>
</feature>
<sequence length="379" mass="43214">MTAIRYEFIKTCKQTGARLGRVHTPHGSFDTPTFMPVGTLATVKTMSPEELKAMDSGIILSNTYHLWLRPGHEIVREAGGLHKFMNWDRAILTDSGGFQVFSLSDFRRIEEEGVHFRNHLNGDKLFLSPEKAMEIQNALGSDIMMAFDECPPFPATFEYMKKSVERTSRWAERCLKAHERPQDQGLFGIVQGGEFEELRRQSAKDLVSMDFPGYAIGGLSVGEPKDIMNRVLEFTTPLLPDDKPRYLMGVGSPDSLIDGAIRGVDMFDCVLPTRIARNGTCMTSEGRLVVKNAKFARDFGPLDPNCDCYTCKNYSRAYIRHLMKCDETFGIRLTSYHNLHFLLNLMEQVRQAIREDRLGDFREEFFEQYGFNKPNAKNF</sequence>
<reference key="1">
    <citation type="journal article" date="2008" name="Chem. Biol. Interact.">
        <title>Extending the Bacillus cereus group genomics to putative food-borne pathogens of different toxicity.</title>
        <authorList>
            <person name="Lapidus A."/>
            <person name="Goltsman E."/>
            <person name="Auger S."/>
            <person name="Galleron N."/>
            <person name="Segurens B."/>
            <person name="Dossat C."/>
            <person name="Land M.L."/>
            <person name="Broussolle V."/>
            <person name="Brillard J."/>
            <person name="Guinebretiere M.-H."/>
            <person name="Sanchis V."/>
            <person name="Nguen-the C."/>
            <person name="Lereclus D."/>
            <person name="Richardson P."/>
            <person name="Wincker P."/>
            <person name="Weissenbach J."/>
            <person name="Ehrlich S.D."/>
            <person name="Sorokin A."/>
        </authorList>
    </citation>
    <scope>NUCLEOTIDE SEQUENCE [LARGE SCALE GENOMIC DNA]</scope>
    <source>
        <strain>KBAB4</strain>
    </source>
</reference>
<gene>
    <name evidence="1" type="primary">tgt</name>
    <name type="ordered locus">BcerKBAB4_4264</name>
</gene>
<evidence type="ECO:0000255" key="1">
    <source>
        <dbReference type="HAMAP-Rule" id="MF_00168"/>
    </source>
</evidence>
<keyword id="KW-0328">Glycosyltransferase</keyword>
<keyword id="KW-0479">Metal-binding</keyword>
<keyword id="KW-0671">Queuosine biosynthesis</keyword>
<keyword id="KW-0808">Transferase</keyword>
<keyword id="KW-0819">tRNA processing</keyword>
<keyword id="KW-0862">Zinc</keyword>